<accession>A8F4T2</accession>
<feature type="chain" id="PRO_1000058929" description="Adenylate kinase">
    <location>
        <begin position="1"/>
        <end position="217"/>
    </location>
</feature>
<feature type="region of interest" description="NMP" evidence="1">
    <location>
        <begin position="30"/>
        <end position="59"/>
    </location>
</feature>
<feature type="region of interest" description="LID" evidence="1">
    <location>
        <begin position="126"/>
        <end position="163"/>
    </location>
</feature>
<feature type="binding site" evidence="1">
    <location>
        <begin position="10"/>
        <end position="15"/>
    </location>
    <ligand>
        <name>ATP</name>
        <dbReference type="ChEBI" id="CHEBI:30616"/>
    </ligand>
</feature>
<feature type="binding site" evidence="1">
    <location>
        <position position="31"/>
    </location>
    <ligand>
        <name>AMP</name>
        <dbReference type="ChEBI" id="CHEBI:456215"/>
    </ligand>
</feature>
<feature type="binding site" evidence="1">
    <location>
        <position position="36"/>
    </location>
    <ligand>
        <name>AMP</name>
        <dbReference type="ChEBI" id="CHEBI:456215"/>
    </ligand>
</feature>
<feature type="binding site" evidence="1">
    <location>
        <begin position="57"/>
        <end position="59"/>
    </location>
    <ligand>
        <name>AMP</name>
        <dbReference type="ChEBI" id="CHEBI:456215"/>
    </ligand>
</feature>
<feature type="binding site" evidence="1">
    <location>
        <begin position="85"/>
        <end position="88"/>
    </location>
    <ligand>
        <name>AMP</name>
        <dbReference type="ChEBI" id="CHEBI:456215"/>
    </ligand>
</feature>
<feature type="binding site" evidence="1">
    <location>
        <position position="92"/>
    </location>
    <ligand>
        <name>AMP</name>
        <dbReference type="ChEBI" id="CHEBI:456215"/>
    </ligand>
</feature>
<feature type="binding site" evidence="1">
    <location>
        <position position="127"/>
    </location>
    <ligand>
        <name>ATP</name>
        <dbReference type="ChEBI" id="CHEBI:30616"/>
    </ligand>
</feature>
<feature type="binding site" evidence="1">
    <location>
        <position position="130"/>
    </location>
    <ligand>
        <name>Zn(2+)</name>
        <dbReference type="ChEBI" id="CHEBI:29105"/>
        <note>structural</note>
    </ligand>
</feature>
<feature type="binding site" evidence="1">
    <location>
        <position position="133"/>
    </location>
    <ligand>
        <name>Zn(2+)</name>
        <dbReference type="ChEBI" id="CHEBI:29105"/>
        <note>structural</note>
    </ligand>
</feature>
<feature type="binding site" evidence="1">
    <location>
        <begin position="136"/>
        <end position="137"/>
    </location>
    <ligand>
        <name>ATP</name>
        <dbReference type="ChEBI" id="CHEBI:30616"/>
    </ligand>
</feature>
<feature type="binding site" evidence="1">
    <location>
        <position position="150"/>
    </location>
    <ligand>
        <name>Zn(2+)</name>
        <dbReference type="ChEBI" id="CHEBI:29105"/>
        <note>structural</note>
    </ligand>
</feature>
<feature type="binding site" evidence="1">
    <location>
        <position position="153"/>
    </location>
    <ligand>
        <name>Zn(2+)</name>
        <dbReference type="ChEBI" id="CHEBI:29105"/>
        <note>structural</note>
    </ligand>
</feature>
<feature type="binding site" evidence="1">
    <location>
        <position position="160"/>
    </location>
    <ligand>
        <name>AMP</name>
        <dbReference type="ChEBI" id="CHEBI:456215"/>
    </ligand>
</feature>
<feature type="binding site" evidence="1">
    <location>
        <position position="171"/>
    </location>
    <ligand>
        <name>AMP</name>
        <dbReference type="ChEBI" id="CHEBI:456215"/>
    </ligand>
</feature>
<feature type="binding site" evidence="1">
    <location>
        <position position="199"/>
    </location>
    <ligand>
        <name>ATP</name>
        <dbReference type="ChEBI" id="CHEBI:30616"/>
    </ligand>
</feature>
<organism>
    <name type="scientific">Pseudothermotoga lettingae (strain ATCC BAA-301 / DSM 14385 / NBRC 107922 / TMO)</name>
    <name type="common">Thermotoga lettingae</name>
    <dbReference type="NCBI Taxonomy" id="416591"/>
    <lineage>
        <taxon>Bacteria</taxon>
        <taxon>Thermotogati</taxon>
        <taxon>Thermotogota</taxon>
        <taxon>Thermotogae</taxon>
        <taxon>Thermotogales</taxon>
        <taxon>Thermotogaceae</taxon>
        <taxon>Pseudothermotoga</taxon>
    </lineage>
</organism>
<protein>
    <recommendedName>
        <fullName evidence="1">Adenylate kinase</fullName>
        <shortName evidence="1">AK</shortName>
        <ecNumber evidence="1">2.7.4.3</ecNumber>
    </recommendedName>
    <alternativeName>
        <fullName evidence="1">ATP-AMP transphosphorylase</fullName>
    </alternativeName>
    <alternativeName>
        <fullName evidence="1">ATP:AMP phosphotransferase</fullName>
    </alternativeName>
    <alternativeName>
        <fullName evidence="1">Adenylate monophosphate kinase</fullName>
    </alternativeName>
</protein>
<evidence type="ECO:0000255" key="1">
    <source>
        <dbReference type="HAMAP-Rule" id="MF_00235"/>
    </source>
</evidence>
<sequence>MKIVLLGAPGAGKGTLAKDLSIMFSVPHISTGDMFREAVAAGTELGVKVQNILSSGALVPDEIVNQVVEERLRKQDCEKGFIFDGYPRTIAQAIALDEILQKMSKKLDLAIYLEASEETVVKRLTSRRICPKCGKIYNLISMPPVSDQICDDCGEQLVIREDDKEEVVRKRYRLYLETTAPLVEYYSGRDILVSVNSERDHRKLVEDVSRLLKKVIS</sequence>
<keyword id="KW-0067">ATP-binding</keyword>
<keyword id="KW-0963">Cytoplasm</keyword>
<keyword id="KW-0418">Kinase</keyword>
<keyword id="KW-0479">Metal-binding</keyword>
<keyword id="KW-0545">Nucleotide biosynthesis</keyword>
<keyword id="KW-0547">Nucleotide-binding</keyword>
<keyword id="KW-1185">Reference proteome</keyword>
<keyword id="KW-0808">Transferase</keyword>
<keyword id="KW-0862">Zinc</keyword>
<comment type="function">
    <text evidence="1">Catalyzes the reversible transfer of the terminal phosphate group between ATP and AMP. Plays an important role in cellular energy homeostasis and in adenine nucleotide metabolism.</text>
</comment>
<comment type="catalytic activity">
    <reaction evidence="1">
        <text>AMP + ATP = 2 ADP</text>
        <dbReference type="Rhea" id="RHEA:12973"/>
        <dbReference type="ChEBI" id="CHEBI:30616"/>
        <dbReference type="ChEBI" id="CHEBI:456215"/>
        <dbReference type="ChEBI" id="CHEBI:456216"/>
        <dbReference type="EC" id="2.7.4.3"/>
    </reaction>
</comment>
<comment type="pathway">
    <text evidence="1">Purine metabolism; AMP biosynthesis via salvage pathway; AMP from ADP: step 1/1.</text>
</comment>
<comment type="subunit">
    <text evidence="1">Monomer.</text>
</comment>
<comment type="subcellular location">
    <subcellularLocation>
        <location evidence="1">Cytoplasm</location>
    </subcellularLocation>
</comment>
<comment type="domain">
    <text evidence="1">Consists of three domains, a large central CORE domain and two small peripheral domains, NMPbind and LID, which undergo movements during catalysis. The LID domain closes over the site of phosphoryl transfer upon ATP binding. Assembling and dissambling the active center during each catalytic cycle provides an effective means to prevent ATP hydrolysis. Some bacteria have evolved a zinc-coordinating structure that stabilizes the LID domain.</text>
</comment>
<comment type="similarity">
    <text evidence="1">Belongs to the adenylate kinase family.</text>
</comment>
<name>KAD_PSELT</name>
<proteinExistence type="inferred from homology"/>
<gene>
    <name evidence="1" type="primary">adk</name>
    <name type="ordered locus">Tlet_0600</name>
</gene>
<reference key="1">
    <citation type="submission" date="2007-08" db="EMBL/GenBank/DDBJ databases">
        <title>Complete sequence of Thermotoga lettingae TMO.</title>
        <authorList>
            <consortium name="US DOE Joint Genome Institute"/>
            <person name="Copeland A."/>
            <person name="Lucas S."/>
            <person name="Lapidus A."/>
            <person name="Barry K."/>
            <person name="Glavina del Rio T."/>
            <person name="Dalin E."/>
            <person name="Tice H."/>
            <person name="Pitluck S."/>
            <person name="Foster B."/>
            <person name="Bruce D."/>
            <person name="Schmutz J."/>
            <person name="Larimer F."/>
            <person name="Land M."/>
            <person name="Hauser L."/>
            <person name="Kyrpides N."/>
            <person name="Mikhailova N."/>
            <person name="Nelson K."/>
            <person name="Gogarten J.P."/>
            <person name="Noll K."/>
            <person name="Richardson P."/>
        </authorList>
    </citation>
    <scope>NUCLEOTIDE SEQUENCE [LARGE SCALE GENOMIC DNA]</scope>
    <source>
        <strain>ATCC BAA-301 / DSM 14385 / NBRC 107922 / TMO</strain>
    </source>
</reference>
<dbReference type="EC" id="2.7.4.3" evidence="1"/>
<dbReference type="EMBL" id="CP000812">
    <property type="protein sequence ID" value="ABV33166.1"/>
    <property type="molecule type" value="Genomic_DNA"/>
</dbReference>
<dbReference type="RefSeq" id="WP_012002647.1">
    <property type="nucleotide sequence ID" value="NZ_BSDV01000001.1"/>
</dbReference>
<dbReference type="SMR" id="A8F4T2"/>
<dbReference type="STRING" id="416591.Tlet_0600"/>
<dbReference type="KEGG" id="tle:Tlet_0600"/>
<dbReference type="eggNOG" id="COG0563">
    <property type="taxonomic scope" value="Bacteria"/>
</dbReference>
<dbReference type="HOGENOM" id="CLU_032354_1_2_0"/>
<dbReference type="OrthoDB" id="9805030at2"/>
<dbReference type="UniPathway" id="UPA00588">
    <property type="reaction ID" value="UER00649"/>
</dbReference>
<dbReference type="Proteomes" id="UP000002016">
    <property type="component" value="Chromosome"/>
</dbReference>
<dbReference type="GO" id="GO:0005737">
    <property type="term" value="C:cytoplasm"/>
    <property type="evidence" value="ECO:0007669"/>
    <property type="project" value="UniProtKB-SubCell"/>
</dbReference>
<dbReference type="GO" id="GO:0004017">
    <property type="term" value="F:adenylate kinase activity"/>
    <property type="evidence" value="ECO:0007669"/>
    <property type="project" value="UniProtKB-UniRule"/>
</dbReference>
<dbReference type="GO" id="GO:0005524">
    <property type="term" value="F:ATP binding"/>
    <property type="evidence" value="ECO:0007669"/>
    <property type="project" value="UniProtKB-UniRule"/>
</dbReference>
<dbReference type="GO" id="GO:0008270">
    <property type="term" value="F:zinc ion binding"/>
    <property type="evidence" value="ECO:0007669"/>
    <property type="project" value="UniProtKB-UniRule"/>
</dbReference>
<dbReference type="GO" id="GO:0044209">
    <property type="term" value="P:AMP salvage"/>
    <property type="evidence" value="ECO:0007669"/>
    <property type="project" value="UniProtKB-UniRule"/>
</dbReference>
<dbReference type="CDD" id="cd01428">
    <property type="entry name" value="ADK"/>
    <property type="match status" value="1"/>
</dbReference>
<dbReference type="FunFam" id="3.40.50.300:FF:000106">
    <property type="entry name" value="Adenylate kinase mitochondrial"/>
    <property type="match status" value="1"/>
</dbReference>
<dbReference type="Gene3D" id="3.40.50.300">
    <property type="entry name" value="P-loop containing nucleotide triphosphate hydrolases"/>
    <property type="match status" value="1"/>
</dbReference>
<dbReference type="HAMAP" id="MF_00235">
    <property type="entry name" value="Adenylate_kinase_Adk"/>
    <property type="match status" value="1"/>
</dbReference>
<dbReference type="InterPro" id="IPR006259">
    <property type="entry name" value="Adenyl_kin_sub"/>
</dbReference>
<dbReference type="InterPro" id="IPR000850">
    <property type="entry name" value="Adenylat/UMP-CMP_kin"/>
</dbReference>
<dbReference type="InterPro" id="IPR033690">
    <property type="entry name" value="Adenylat_kinase_CS"/>
</dbReference>
<dbReference type="InterPro" id="IPR007862">
    <property type="entry name" value="Adenylate_kinase_lid-dom"/>
</dbReference>
<dbReference type="InterPro" id="IPR027417">
    <property type="entry name" value="P-loop_NTPase"/>
</dbReference>
<dbReference type="NCBIfam" id="TIGR01351">
    <property type="entry name" value="adk"/>
    <property type="match status" value="1"/>
</dbReference>
<dbReference type="NCBIfam" id="NF001380">
    <property type="entry name" value="PRK00279.1-2"/>
    <property type="match status" value="1"/>
</dbReference>
<dbReference type="NCBIfam" id="NF001381">
    <property type="entry name" value="PRK00279.1-3"/>
    <property type="match status" value="1"/>
</dbReference>
<dbReference type="NCBIfam" id="NF001386">
    <property type="entry name" value="PRK00279.2-4"/>
    <property type="match status" value="1"/>
</dbReference>
<dbReference type="PANTHER" id="PTHR23359">
    <property type="entry name" value="NUCLEOTIDE KINASE"/>
    <property type="match status" value="1"/>
</dbReference>
<dbReference type="Pfam" id="PF00406">
    <property type="entry name" value="ADK"/>
    <property type="match status" value="1"/>
</dbReference>
<dbReference type="Pfam" id="PF05191">
    <property type="entry name" value="ADK_lid"/>
    <property type="match status" value="1"/>
</dbReference>
<dbReference type="PRINTS" id="PR00094">
    <property type="entry name" value="ADENYLTKNASE"/>
</dbReference>
<dbReference type="SUPFAM" id="SSF52540">
    <property type="entry name" value="P-loop containing nucleoside triphosphate hydrolases"/>
    <property type="match status" value="1"/>
</dbReference>
<dbReference type="PROSITE" id="PS00113">
    <property type="entry name" value="ADENYLATE_KINASE"/>
    <property type="match status" value="1"/>
</dbReference>